<feature type="chain" id="PRO_1000071299" description="Holo-[acyl-carrier-protein] synthase">
    <location>
        <begin position="1"/>
        <end position="119"/>
    </location>
</feature>
<feature type="binding site" evidence="1">
    <location>
        <position position="8"/>
    </location>
    <ligand>
        <name>Mg(2+)</name>
        <dbReference type="ChEBI" id="CHEBI:18420"/>
    </ligand>
</feature>
<feature type="binding site" evidence="1">
    <location>
        <position position="59"/>
    </location>
    <ligand>
        <name>Mg(2+)</name>
        <dbReference type="ChEBI" id="CHEBI:18420"/>
    </ligand>
</feature>
<gene>
    <name evidence="1" type="primary">acpS</name>
    <name type="ordered locus">NWMN_1976</name>
</gene>
<accession>A6QIR6</accession>
<keyword id="KW-0963">Cytoplasm</keyword>
<keyword id="KW-0275">Fatty acid biosynthesis</keyword>
<keyword id="KW-0276">Fatty acid metabolism</keyword>
<keyword id="KW-0444">Lipid biosynthesis</keyword>
<keyword id="KW-0443">Lipid metabolism</keyword>
<keyword id="KW-0460">Magnesium</keyword>
<keyword id="KW-0479">Metal-binding</keyword>
<keyword id="KW-0808">Transferase</keyword>
<reference key="1">
    <citation type="journal article" date="2008" name="J. Bacteriol.">
        <title>Genome sequence of Staphylococcus aureus strain Newman and comparative analysis of staphylococcal genomes: polymorphism and evolution of two major pathogenicity islands.</title>
        <authorList>
            <person name="Baba T."/>
            <person name="Bae T."/>
            <person name="Schneewind O."/>
            <person name="Takeuchi F."/>
            <person name="Hiramatsu K."/>
        </authorList>
    </citation>
    <scope>NUCLEOTIDE SEQUENCE [LARGE SCALE GENOMIC DNA]</scope>
    <source>
        <strain>Newman</strain>
    </source>
</reference>
<proteinExistence type="inferred from homology"/>
<protein>
    <recommendedName>
        <fullName evidence="1">Holo-[acyl-carrier-protein] synthase</fullName>
        <shortName evidence="1">Holo-ACP synthase</shortName>
        <ecNumber evidence="1">2.7.8.7</ecNumber>
    </recommendedName>
    <alternativeName>
        <fullName evidence="1">4'-phosphopantetheinyl transferase AcpS</fullName>
    </alternativeName>
</protein>
<dbReference type="EC" id="2.7.8.7" evidence="1"/>
<dbReference type="EMBL" id="AP009351">
    <property type="protein sequence ID" value="BAF68248.1"/>
    <property type="molecule type" value="Genomic_DNA"/>
</dbReference>
<dbReference type="RefSeq" id="WP_000581200.1">
    <property type="nucleotide sequence ID" value="NZ_JBBIAE010000008.1"/>
</dbReference>
<dbReference type="BMRB" id="A6QIR6"/>
<dbReference type="SMR" id="A6QIR6"/>
<dbReference type="KEGG" id="sae:NWMN_1976"/>
<dbReference type="HOGENOM" id="CLU_089696_1_2_9"/>
<dbReference type="Proteomes" id="UP000006386">
    <property type="component" value="Chromosome"/>
</dbReference>
<dbReference type="GO" id="GO:0005737">
    <property type="term" value="C:cytoplasm"/>
    <property type="evidence" value="ECO:0007669"/>
    <property type="project" value="UniProtKB-SubCell"/>
</dbReference>
<dbReference type="GO" id="GO:0008897">
    <property type="term" value="F:holo-[acyl-carrier-protein] synthase activity"/>
    <property type="evidence" value="ECO:0007669"/>
    <property type="project" value="UniProtKB-UniRule"/>
</dbReference>
<dbReference type="GO" id="GO:0000287">
    <property type="term" value="F:magnesium ion binding"/>
    <property type="evidence" value="ECO:0007669"/>
    <property type="project" value="UniProtKB-UniRule"/>
</dbReference>
<dbReference type="GO" id="GO:0006633">
    <property type="term" value="P:fatty acid biosynthetic process"/>
    <property type="evidence" value="ECO:0007669"/>
    <property type="project" value="UniProtKB-UniRule"/>
</dbReference>
<dbReference type="Gene3D" id="3.90.470.20">
    <property type="entry name" value="4'-phosphopantetheinyl transferase domain"/>
    <property type="match status" value="1"/>
</dbReference>
<dbReference type="HAMAP" id="MF_00101">
    <property type="entry name" value="AcpS"/>
    <property type="match status" value="1"/>
</dbReference>
<dbReference type="InterPro" id="IPR008278">
    <property type="entry name" value="4-PPantetheinyl_Trfase_dom"/>
</dbReference>
<dbReference type="InterPro" id="IPR037143">
    <property type="entry name" value="4-PPantetheinyl_Trfase_dom_sf"/>
</dbReference>
<dbReference type="InterPro" id="IPR002582">
    <property type="entry name" value="ACPS"/>
</dbReference>
<dbReference type="InterPro" id="IPR004568">
    <property type="entry name" value="Ppantetheine-prot_Trfase_dom"/>
</dbReference>
<dbReference type="NCBIfam" id="TIGR00516">
    <property type="entry name" value="acpS"/>
    <property type="match status" value="1"/>
</dbReference>
<dbReference type="NCBIfam" id="TIGR00556">
    <property type="entry name" value="pantethn_trn"/>
    <property type="match status" value="1"/>
</dbReference>
<dbReference type="Pfam" id="PF01648">
    <property type="entry name" value="ACPS"/>
    <property type="match status" value="1"/>
</dbReference>
<dbReference type="SUPFAM" id="SSF56214">
    <property type="entry name" value="4'-phosphopantetheinyl transferase"/>
    <property type="match status" value="1"/>
</dbReference>
<sequence length="119" mass="13606">MIHGIGVDLIEIDRIQALYSKQPKLVERILTKNEQHKFNNFTHEQRKIEFLAGRFATKEAFSKALGTGLGKHVAFNDIDCYNDELGKPKIDYEGFIVHVSISHTEHYAMSQVVLEKSAF</sequence>
<organism>
    <name type="scientific">Staphylococcus aureus (strain Newman)</name>
    <dbReference type="NCBI Taxonomy" id="426430"/>
    <lineage>
        <taxon>Bacteria</taxon>
        <taxon>Bacillati</taxon>
        <taxon>Bacillota</taxon>
        <taxon>Bacilli</taxon>
        <taxon>Bacillales</taxon>
        <taxon>Staphylococcaceae</taxon>
        <taxon>Staphylococcus</taxon>
    </lineage>
</organism>
<name>ACPS_STAAE</name>
<comment type="function">
    <text evidence="1">Transfers the 4'-phosphopantetheine moiety from coenzyme A to a Ser of acyl-carrier-protein.</text>
</comment>
<comment type="catalytic activity">
    <reaction evidence="1">
        <text>apo-[ACP] + CoA = holo-[ACP] + adenosine 3',5'-bisphosphate + H(+)</text>
        <dbReference type="Rhea" id="RHEA:12068"/>
        <dbReference type="Rhea" id="RHEA-COMP:9685"/>
        <dbReference type="Rhea" id="RHEA-COMP:9690"/>
        <dbReference type="ChEBI" id="CHEBI:15378"/>
        <dbReference type="ChEBI" id="CHEBI:29999"/>
        <dbReference type="ChEBI" id="CHEBI:57287"/>
        <dbReference type="ChEBI" id="CHEBI:58343"/>
        <dbReference type="ChEBI" id="CHEBI:64479"/>
        <dbReference type="EC" id="2.7.8.7"/>
    </reaction>
</comment>
<comment type="cofactor">
    <cofactor evidence="1">
        <name>Mg(2+)</name>
        <dbReference type="ChEBI" id="CHEBI:18420"/>
    </cofactor>
</comment>
<comment type="subcellular location">
    <subcellularLocation>
        <location evidence="1">Cytoplasm</location>
    </subcellularLocation>
</comment>
<comment type="similarity">
    <text evidence="1">Belongs to the P-Pant transferase superfamily. AcpS family.</text>
</comment>
<evidence type="ECO:0000255" key="1">
    <source>
        <dbReference type="HAMAP-Rule" id="MF_00101"/>
    </source>
</evidence>